<evidence type="ECO:0000250" key="1"/>
<evidence type="ECO:0000255" key="2">
    <source>
        <dbReference type="PROSITE-ProRule" id="PRU00639"/>
    </source>
</evidence>
<evidence type="ECO:0000305" key="3"/>
<protein>
    <recommendedName>
        <fullName>Galectin-related protein</fullName>
    </recommendedName>
    <alternativeName>
        <fullName>Lectin galactoside-binding-like protein</fullName>
    </alternativeName>
</protein>
<organism>
    <name type="scientific">Xenopus tropicalis</name>
    <name type="common">Western clawed frog</name>
    <name type="synonym">Silurana tropicalis</name>
    <dbReference type="NCBI Taxonomy" id="8364"/>
    <lineage>
        <taxon>Eukaryota</taxon>
        <taxon>Metazoa</taxon>
        <taxon>Chordata</taxon>
        <taxon>Craniata</taxon>
        <taxon>Vertebrata</taxon>
        <taxon>Euteleostomi</taxon>
        <taxon>Amphibia</taxon>
        <taxon>Batrachia</taxon>
        <taxon>Anura</taxon>
        <taxon>Pipoidea</taxon>
        <taxon>Pipidae</taxon>
        <taxon>Xenopodinae</taxon>
        <taxon>Xenopus</taxon>
        <taxon>Silurana</taxon>
    </lineage>
</organism>
<keyword id="KW-0430">Lectin</keyword>
<keyword id="KW-1185">Reference proteome</keyword>
<comment type="function">
    <text evidence="1">Does not bind lactose, and may not bind carbohydrates.</text>
</comment>
<comment type="caution">
    <text evidence="3">Most of the residues in the galectin domain that have been shown to be critical for carbohydrate-binding in other galectins are not conserved.</text>
</comment>
<reference key="1">
    <citation type="submission" date="2006-10" db="EMBL/GenBank/DDBJ databases">
        <authorList>
            <consortium name="Sanger Xenopus tropicalis EST/cDNA project"/>
        </authorList>
    </citation>
    <scope>NUCLEOTIDE SEQUENCE [LARGE SCALE MRNA]</scope>
    <source>
        <tissue>Neurula</tissue>
    </source>
</reference>
<reference key="2">
    <citation type="submission" date="2004-03" db="EMBL/GenBank/DDBJ databases">
        <authorList>
            <consortium name="NIH - Xenopus Gene Collection (XGC) project"/>
        </authorList>
    </citation>
    <scope>NUCLEOTIDE SEQUENCE [LARGE SCALE MRNA]</scope>
    <source>
        <tissue>Embryo</tissue>
    </source>
</reference>
<proteinExistence type="evidence at transcript level"/>
<name>LEGL_XENTR</name>
<gene>
    <name type="primary">lgalsl</name>
    <name type="synonym">grp</name>
    <name type="ORF">TNeu102b22.1</name>
</gene>
<sequence>MAGSLVESEALQMGVRRLSSPLTSPVQAEVYFPRLTVPFCGHIKGGMRPGKKILIMGIVNLEPKSFDIRLTCGDSEDPAADIAIELRAEFADKQLLRNACVSGKWGEEESAIPYFPFIADQPFRVEIHCEHPRLRIFVDGHQLFDFYHRVETLSAINTIKINGDLQLTKLG</sequence>
<feature type="chain" id="PRO_0000315774" description="Galectin-related protein">
    <location>
        <begin position="1"/>
        <end position="171"/>
    </location>
</feature>
<feature type="domain" description="Galectin" evidence="2">
    <location>
        <begin position="38"/>
        <end position="170"/>
    </location>
</feature>
<accession>Q6NVI7</accession>
<dbReference type="EMBL" id="CR942698">
    <property type="protein sequence ID" value="CAJ83081.1"/>
    <property type="molecule type" value="mRNA"/>
</dbReference>
<dbReference type="EMBL" id="BC068036">
    <property type="protein sequence ID" value="AAH68036.1"/>
    <property type="molecule type" value="mRNA"/>
</dbReference>
<dbReference type="RefSeq" id="NP_001001900.1">
    <property type="nucleotide sequence ID" value="NM_001001900.1"/>
</dbReference>
<dbReference type="SMR" id="Q6NVI7"/>
<dbReference type="FunCoup" id="Q6NVI7">
    <property type="interactions" value="151"/>
</dbReference>
<dbReference type="STRING" id="8364.ENSXETP00000008501"/>
<dbReference type="PaxDb" id="8364-ENSXETP00000054765"/>
<dbReference type="DNASU" id="431677"/>
<dbReference type="GeneID" id="431677"/>
<dbReference type="KEGG" id="xtr:431677"/>
<dbReference type="AGR" id="Xenbase:XB-GENE-957366"/>
<dbReference type="CTD" id="29094"/>
<dbReference type="Xenbase" id="XB-GENE-957366">
    <property type="gene designation" value="lgalsl"/>
</dbReference>
<dbReference type="eggNOG" id="KOG3587">
    <property type="taxonomic scope" value="Eukaryota"/>
</dbReference>
<dbReference type="HOGENOM" id="CLU_037794_2_1_1"/>
<dbReference type="InParanoid" id="Q6NVI7"/>
<dbReference type="OrthoDB" id="9857238at2759"/>
<dbReference type="TreeFam" id="TF315551"/>
<dbReference type="Proteomes" id="UP000008143">
    <property type="component" value="Chromosome 5"/>
</dbReference>
<dbReference type="Bgee" id="ENSXETG00000025808">
    <property type="expression patterns" value="Expressed in neurula embryo and 16 other cell types or tissues"/>
</dbReference>
<dbReference type="ExpressionAtlas" id="Q6NVI7">
    <property type="expression patterns" value="differential"/>
</dbReference>
<dbReference type="GO" id="GO:0030246">
    <property type="term" value="F:carbohydrate binding"/>
    <property type="evidence" value="ECO:0007669"/>
    <property type="project" value="UniProtKB-KW"/>
</dbReference>
<dbReference type="CDD" id="cd00070">
    <property type="entry name" value="GLECT"/>
    <property type="match status" value="1"/>
</dbReference>
<dbReference type="FunFam" id="2.60.120.200:FF:000046">
    <property type="entry name" value="Galectin"/>
    <property type="match status" value="1"/>
</dbReference>
<dbReference type="Gene3D" id="2.60.120.200">
    <property type="match status" value="1"/>
</dbReference>
<dbReference type="InterPro" id="IPR013320">
    <property type="entry name" value="ConA-like_dom_sf"/>
</dbReference>
<dbReference type="InterPro" id="IPR044156">
    <property type="entry name" value="Galectin-like"/>
</dbReference>
<dbReference type="InterPro" id="IPR001079">
    <property type="entry name" value="Galectin_CRD"/>
</dbReference>
<dbReference type="PANTHER" id="PTHR11346">
    <property type="entry name" value="GALECTIN"/>
    <property type="match status" value="1"/>
</dbReference>
<dbReference type="PANTHER" id="PTHR11346:SF98">
    <property type="entry name" value="GALECTIN-RELATED PROTEIN"/>
    <property type="match status" value="1"/>
</dbReference>
<dbReference type="Pfam" id="PF00337">
    <property type="entry name" value="Gal-bind_lectin"/>
    <property type="match status" value="1"/>
</dbReference>
<dbReference type="SMART" id="SM00908">
    <property type="entry name" value="Gal-bind_lectin"/>
    <property type="match status" value="1"/>
</dbReference>
<dbReference type="SMART" id="SM00276">
    <property type="entry name" value="GLECT"/>
    <property type="match status" value="1"/>
</dbReference>
<dbReference type="SUPFAM" id="SSF49899">
    <property type="entry name" value="Concanavalin A-like lectins/glucanases"/>
    <property type="match status" value="1"/>
</dbReference>
<dbReference type="PROSITE" id="PS51304">
    <property type="entry name" value="GALECTIN"/>
    <property type="match status" value="1"/>
</dbReference>